<name>RLME_BURMA</name>
<keyword id="KW-0963">Cytoplasm</keyword>
<keyword id="KW-0489">Methyltransferase</keyword>
<keyword id="KW-1185">Reference proteome</keyword>
<keyword id="KW-0698">rRNA processing</keyword>
<keyword id="KW-0949">S-adenosyl-L-methionine</keyword>
<keyword id="KW-0808">Transferase</keyword>
<reference key="1">
    <citation type="journal article" date="2004" name="Proc. Natl. Acad. Sci. U.S.A.">
        <title>Structural flexibility in the Burkholderia mallei genome.</title>
        <authorList>
            <person name="Nierman W.C."/>
            <person name="DeShazer D."/>
            <person name="Kim H.S."/>
            <person name="Tettelin H."/>
            <person name="Nelson K.E."/>
            <person name="Feldblyum T.V."/>
            <person name="Ulrich R.L."/>
            <person name="Ronning C.M."/>
            <person name="Brinkac L.M."/>
            <person name="Daugherty S.C."/>
            <person name="Davidsen T.D."/>
            <person name="DeBoy R.T."/>
            <person name="Dimitrov G."/>
            <person name="Dodson R.J."/>
            <person name="Durkin A.S."/>
            <person name="Gwinn M.L."/>
            <person name="Haft D.H."/>
            <person name="Khouri H.M."/>
            <person name="Kolonay J.F."/>
            <person name="Madupu R."/>
            <person name="Mohammoud Y."/>
            <person name="Nelson W.C."/>
            <person name="Radune D."/>
            <person name="Romero C.M."/>
            <person name="Sarria S."/>
            <person name="Selengut J."/>
            <person name="Shamblin C."/>
            <person name="Sullivan S.A."/>
            <person name="White O."/>
            <person name="Yu Y."/>
            <person name="Zafar N."/>
            <person name="Zhou L."/>
            <person name="Fraser C.M."/>
        </authorList>
    </citation>
    <scope>NUCLEOTIDE SEQUENCE [LARGE SCALE GENOMIC DNA]</scope>
    <source>
        <strain>ATCC 23344</strain>
    </source>
</reference>
<gene>
    <name evidence="1" type="primary">rlmE</name>
    <name evidence="1" type="synonym">ftsJ</name>
    <name evidence="1" type="synonym">rrmJ</name>
    <name type="ordered locus">BMA0776</name>
</gene>
<sequence>MAKNRFNQSWLHDHINDPYVKMAQREGYRARAAYKLKEIDEQDKLIRPGQVIVDLGAAPGSWSQYARNKLAQGKRRDAVREGGIDGTIIALDMLPMEPVADVHFIQGDFREESVLHQLEEVLAGRAVDLVISDMAPNLSGVAVADAARIEHVCDLALEFAQNHLKPDGALLVKCFHGSGYSQIVEKFKHQFKTVAPRKPKASRDKSSETFILGRHLKQPR</sequence>
<comment type="function">
    <text evidence="1">Specifically methylates the uridine in position 2552 of 23S rRNA at the 2'-O position of the ribose in the fully assembled 50S ribosomal subunit.</text>
</comment>
<comment type="catalytic activity">
    <reaction evidence="1">
        <text>uridine(2552) in 23S rRNA + S-adenosyl-L-methionine = 2'-O-methyluridine(2552) in 23S rRNA + S-adenosyl-L-homocysteine + H(+)</text>
        <dbReference type="Rhea" id="RHEA:42720"/>
        <dbReference type="Rhea" id="RHEA-COMP:10202"/>
        <dbReference type="Rhea" id="RHEA-COMP:10203"/>
        <dbReference type="ChEBI" id="CHEBI:15378"/>
        <dbReference type="ChEBI" id="CHEBI:57856"/>
        <dbReference type="ChEBI" id="CHEBI:59789"/>
        <dbReference type="ChEBI" id="CHEBI:65315"/>
        <dbReference type="ChEBI" id="CHEBI:74478"/>
        <dbReference type="EC" id="2.1.1.166"/>
    </reaction>
</comment>
<comment type="subcellular location">
    <subcellularLocation>
        <location evidence="1">Cytoplasm</location>
    </subcellularLocation>
</comment>
<comment type="similarity">
    <text evidence="1">Belongs to the class I-like SAM-binding methyltransferase superfamily. RNA methyltransferase RlmE family.</text>
</comment>
<proteinExistence type="inferred from homology"/>
<organism>
    <name type="scientific">Burkholderia mallei (strain ATCC 23344)</name>
    <dbReference type="NCBI Taxonomy" id="243160"/>
    <lineage>
        <taxon>Bacteria</taxon>
        <taxon>Pseudomonadati</taxon>
        <taxon>Pseudomonadota</taxon>
        <taxon>Betaproteobacteria</taxon>
        <taxon>Burkholderiales</taxon>
        <taxon>Burkholderiaceae</taxon>
        <taxon>Burkholderia</taxon>
        <taxon>pseudomallei group</taxon>
    </lineage>
</organism>
<protein>
    <recommendedName>
        <fullName evidence="1">Ribosomal RNA large subunit methyltransferase E</fullName>
        <ecNumber evidence="1">2.1.1.166</ecNumber>
    </recommendedName>
    <alternativeName>
        <fullName evidence="1">23S rRNA Um2552 methyltransferase</fullName>
    </alternativeName>
    <alternativeName>
        <fullName evidence="1">rRNA (uridine-2'-O-)-methyltransferase</fullName>
    </alternativeName>
</protein>
<evidence type="ECO:0000255" key="1">
    <source>
        <dbReference type="HAMAP-Rule" id="MF_01547"/>
    </source>
</evidence>
<evidence type="ECO:0000256" key="2">
    <source>
        <dbReference type="SAM" id="MobiDB-lite"/>
    </source>
</evidence>
<dbReference type="EC" id="2.1.1.166" evidence="1"/>
<dbReference type="EMBL" id="CP000010">
    <property type="protein sequence ID" value="AAU49562.1"/>
    <property type="molecule type" value="Genomic_DNA"/>
</dbReference>
<dbReference type="RefSeq" id="WP_004193119.1">
    <property type="nucleotide sequence ID" value="NC_006348.1"/>
</dbReference>
<dbReference type="RefSeq" id="YP_102539.1">
    <property type="nucleotide sequence ID" value="NC_006348.1"/>
</dbReference>
<dbReference type="SMR" id="Q62L80"/>
<dbReference type="KEGG" id="bma:BMA0776"/>
<dbReference type="PATRIC" id="fig|243160.12.peg.799"/>
<dbReference type="eggNOG" id="COG0293">
    <property type="taxonomic scope" value="Bacteria"/>
</dbReference>
<dbReference type="HOGENOM" id="CLU_009422_4_1_4"/>
<dbReference type="Proteomes" id="UP000006693">
    <property type="component" value="Chromosome 1"/>
</dbReference>
<dbReference type="GO" id="GO:0005737">
    <property type="term" value="C:cytoplasm"/>
    <property type="evidence" value="ECO:0007669"/>
    <property type="project" value="UniProtKB-SubCell"/>
</dbReference>
<dbReference type="GO" id="GO:0008650">
    <property type="term" value="F:rRNA (uridine-2'-O-)-methyltransferase activity"/>
    <property type="evidence" value="ECO:0007669"/>
    <property type="project" value="UniProtKB-UniRule"/>
</dbReference>
<dbReference type="FunFam" id="3.40.50.150:FF:000005">
    <property type="entry name" value="Ribosomal RNA large subunit methyltransferase E"/>
    <property type="match status" value="1"/>
</dbReference>
<dbReference type="Gene3D" id="3.40.50.150">
    <property type="entry name" value="Vaccinia Virus protein VP39"/>
    <property type="match status" value="1"/>
</dbReference>
<dbReference type="HAMAP" id="MF_01547">
    <property type="entry name" value="RNA_methyltr_E"/>
    <property type="match status" value="1"/>
</dbReference>
<dbReference type="InterPro" id="IPR050082">
    <property type="entry name" value="RNA_methyltr_RlmE"/>
</dbReference>
<dbReference type="InterPro" id="IPR002877">
    <property type="entry name" value="RNA_MeTrfase_FtsJ_dom"/>
</dbReference>
<dbReference type="InterPro" id="IPR015507">
    <property type="entry name" value="rRNA-MeTfrase_E"/>
</dbReference>
<dbReference type="InterPro" id="IPR029063">
    <property type="entry name" value="SAM-dependent_MTases_sf"/>
</dbReference>
<dbReference type="PANTHER" id="PTHR10920">
    <property type="entry name" value="RIBOSOMAL RNA METHYLTRANSFERASE"/>
    <property type="match status" value="1"/>
</dbReference>
<dbReference type="PANTHER" id="PTHR10920:SF18">
    <property type="entry name" value="RRNA METHYLTRANSFERASE 2, MITOCHONDRIAL"/>
    <property type="match status" value="1"/>
</dbReference>
<dbReference type="Pfam" id="PF01728">
    <property type="entry name" value="FtsJ"/>
    <property type="match status" value="1"/>
</dbReference>
<dbReference type="PIRSF" id="PIRSF005461">
    <property type="entry name" value="23S_rRNA_mtase"/>
    <property type="match status" value="1"/>
</dbReference>
<dbReference type="SUPFAM" id="SSF53335">
    <property type="entry name" value="S-adenosyl-L-methionine-dependent methyltransferases"/>
    <property type="match status" value="1"/>
</dbReference>
<accession>Q62L80</accession>
<feature type="chain" id="PRO_0000155484" description="Ribosomal RNA large subunit methyltransferase E">
    <location>
        <begin position="1"/>
        <end position="220"/>
    </location>
</feature>
<feature type="region of interest" description="Disordered" evidence="2">
    <location>
        <begin position="195"/>
        <end position="220"/>
    </location>
</feature>
<feature type="active site" description="Proton acceptor" evidence="1">
    <location>
        <position position="173"/>
    </location>
</feature>
<feature type="binding site" evidence="1">
    <location>
        <position position="60"/>
    </location>
    <ligand>
        <name>S-adenosyl-L-methionine</name>
        <dbReference type="ChEBI" id="CHEBI:59789"/>
    </ligand>
</feature>
<feature type="binding site" evidence="1">
    <location>
        <position position="62"/>
    </location>
    <ligand>
        <name>S-adenosyl-L-methionine</name>
        <dbReference type="ChEBI" id="CHEBI:59789"/>
    </ligand>
</feature>
<feature type="binding site" evidence="1">
    <location>
        <position position="92"/>
    </location>
    <ligand>
        <name>S-adenosyl-L-methionine</name>
        <dbReference type="ChEBI" id="CHEBI:59789"/>
    </ligand>
</feature>
<feature type="binding site" evidence="1">
    <location>
        <position position="108"/>
    </location>
    <ligand>
        <name>S-adenosyl-L-methionine</name>
        <dbReference type="ChEBI" id="CHEBI:59789"/>
    </ligand>
</feature>
<feature type="binding site" evidence="1">
    <location>
        <position position="133"/>
    </location>
    <ligand>
        <name>S-adenosyl-L-methionine</name>
        <dbReference type="ChEBI" id="CHEBI:59789"/>
    </ligand>
</feature>